<sequence>MSVRSVIRGSGSALPRRAVSNAEMTTMVDTTDEWIVERTGIRNRYIAGEGETTSTLATEAARKALEAAGVDASRIDLIVLATATPDQTFPATATIVQHNLGCNGGIAFDVAAVCSGFLYALATADSMIRSGMARCALVIGAETMSRLLDWEDRTTCVLFGDGAGAVVLEAVDVDETDPKAPGILATRLHADGAHNELLYVDGGPSTTGTVGKLRMKGREVFRHAVTNLANVLKEVLETTGHDAEEIDWVVPHQANFRILDATARKLDLPADKVIVTVDHHANTSAASVPLAYDTAVRDGRIKPGDLVMFEAMGGGFTWGASLARV</sequence>
<reference key="1">
    <citation type="submission" date="2006-01" db="EMBL/GenBank/DDBJ databases">
        <title>Complete sequence of Novosphingobium aromaticivorans DSM 12444.</title>
        <authorList>
            <consortium name="US DOE Joint Genome Institute"/>
            <person name="Copeland A."/>
            <person name="Lucas S."/>
            <person name="Lapidus A."/>
            <person name="Barry K."/>
            <person name="Detter J.C."/>
            <person name="Glavina T."/>
            <person name="Hammon N."/>
            <person name="Israni S."/>
            <person name="Pitluck S."/>
            <person name="Chain P."/>
            <person name="Malfatti S."/>
            <person name="Shin M."/>
            <person name="Vergez L."/>
            <person name="Schmutz J."/>
            <person name="Larimer F."/>
            <person name="Land M."/>
            <person name="Kyrpides N."/>
            <person name="Ivanova N."/>
            <person name="Fredrickson J."/>
            <person name="Balkwill D."/>
            <person name="Romine M.F."/>
            <person name="Richardson P."/>
        </authorList>
    </citation>
    <scope>NUCLEOTIDE SEQUENCE [LARGE SCALE GENOMIC DNA]</scope>
    <source>
        <strain>ATCC 700278 / DSM 12444 / CCUG 56034 / CIP 105152 / NBRC 16084 / F199</strain>
    </source>
</reference>
<proteinExistence type="inferred from homology"/>
<accession>Q2G5S1</accession>
<gene>
    <name evidence="1" type="primary">fabH</name>
    <name type="ordered locus">Saro_2366</name>
</gene>
<comment type="function">
    <text evidence="1">Catalyzes the condensation reaction of fatty acid synthesis by the addition to an acyl acceptor of two carbons from malonyl-ACP. Catalyzes the first condensation reaction which initiates fatty acid synthesis and may therefore play a role in governing the total rate of fatty acid production. Possesses both acetoacetyl-ACP synthase and acetyl transacylase activities. Its substrate specificity determines the biosynthesis of branched-chain and/or straight-chain of fatty acids.</text>
</comment>
<comment type="catalytic activity">
    <reaction evidence="1">
        <text>malonyl-[ACP] + acetyl-CoA + H(+) = 3-oxobutanoyl-[ACP] + CO2 + CoA</text>
        <dbReference type="Rhea" id="RHEA:12080"/>
        <dbReference type="Rhea" id="RHEA-COMP:9623"/>
        <dbReference type="Rhea" id="RHEA-COMP:9625"/>
        <dbReference type="ChEBI" id="CHEBI:15378"/>
        <dbReference type="ChEBI" id="CHEBI:16526"/>
        <dbReference type="ChEBI" id="CHEBI:57287"/>
        <dbReference type="ChEBI" id="CHEBI:57288"/>
        <dbReference type="ChEBI" id="CHEBI:78449"/>
        <dbReference type="ChEBI" id="CHEBI:78450"/>
        <dbReference type="EC" id="2.3.1.180"/>
    </reaction>
</comment>
<comment type="pathway">
    <text evidence="1">Lipid metabolism; fatty acid biosynthesis.</text>
</comment>
<comment type="subunit">
    <text evidence="1">Homodimer.</text>
</comment>
<comment type="subcellular location">
    <subcellularLocation>
        <location evidence="1">Cytoplasm</location>
    </subcellularLocation>
</comment>
<comment type="domain">
    <text evidence="1">The last Arg residue of the ACP-binding site is essential for the weak association between ACP/AcpP and FabH.</text>
</comment>
<comment type="similarity">
    <text evidence="1">Belongs to the thiolase-like superfamily. FabH family.</text>
</comment>
<dbReference type="EC" id="2.3.1.180" evidence="1"/>
<dbReference type="EMBL" id="CP000248">
    <property type="protein sequence ID" value="ABD26802.1"/>
    <property type="molecule type" value="Genomic_DNA"/>
</dbReference>
<dbReference type="RefSeq" id="WP_011446008.1">
    <property type="nucleotide sequence ID" value="NC_007794.1"/>
</dbReference>
<dbReference type="SMR" id="Q2G5S1"/>
<dbReference type="STRING" id="279238.Saro_2366"/>
<dbReference type="KEGG" id="nar:Saro_2366"/>
<dbReference type="eggNOG" id="COG0332">
    <property type="taxonomic scope" value="Bacteria"/>
</dbReference>
<dbReference type="HOGENOM" id="CLU_039592_3_1_5"/>
<dbReference type="UniPathway" id="UPA00094"/>
<dbReference type="Proteomes" id="UP000009134">
    <property type="component" value="Chromosome"/>
</dbReference>
<dbReference type="GO" id="GO:0005737">
    <property type="term" value="C:cytoplasm"/>
    <property type="evidence" value="ECO:0007669"/>
    <property type="project" value="UniProtKB-SubCell"/>
</dbReference>
<dbReference type="GO" id="GO:0004315">
    <property type="term" value="F:3-oxoacyl-[acyl-carrier-protein] synthase activity"/>
    <property type="evidence" value="ECO:0007669"/>
    <property type="project" value="InterPro"/>
</dbReference>
<dbReference type="GO" id="GO:0033818">
    <property type="term" value="F:beta-ketoacyl-acyl-carrier-protein synthase III activity"/>
    <property type="evidence" value="ECO:0007669"/>
    <property type="project" value="UniProtKB-UniRule"/>
</dbReference>
<dbReference type="GO" id="GO:0006633">
    <property type="term" value="P:fatty acid biosynthetic process"/>
    <property type="evidence" value="ECO:0007669"/>
    <property type="project" value="UniProtKB-UniRule"/>
</dbReference>
<dbReference type="CDD" id="cd00830">
    <property type="entry name" value="KAS_III"/>
    <property type="match status" value="1"/>
</dbReference>
<dbReference type="FunFam" id="3.40.47.10:FF:000004">
    <property type="entry name" value="3-oxoacyl-[acyl-carrier-protein] synthase 3"/>
    <property type="match status" value="1"/>
</dbReference>
<dbReference type="Gene3D" id="3.40.47.10">
    <property type="match status" value="1"/>
</dbReference>
<dbReference type="HAMAP" id="MF_01815">
    <property type="entry name" value="FabH"/>
    <property type="match status" value="1"/>
</dbReference>
<dbReference type="InterPro" id="IPR013747">
    <property type="entry name" value="ACP_syn_III_C"/>
</dbReference>
<dbReference type="InterPro" id="IPR013751">
    <property type="entry name" value="ACP_syn_III_N"/>
</dbReference>
<dbReference type="InterPro" id="IPR004655">
    <property type="entry name" value="FabH"/>
</dbReference>
<dbReference type="InterPro" id="IPR016039">
    <property type="entry name" value="Thiolase-like"/>
</dbReference>
<dbReference type="NCBIfam" id="TIGR00747">
    <property type="entry name" value="fabH"/>
    <property type="match status" value="1"/>
</dbReference>
<dbReference type="NCBIfam" id="NF006829">
    <property type="entry name" value="PRK09352.1"/>
    <property type="match status" value="1"/>
</dbReference>
<dbReference type="PANTHER" id="PTHR43091">
    <property type="entry name" value="3-OXOACYL-[ACYL-CARRIER-PROTEIN] SYNTHASE"/>
    <property type="match status" value="1"/>
</dbReference>
<dbReference type="PANTHER" id="PTHR43091:SF1">
    <property type="entry name" value="BETA-KETOACYL-[ACYL-CARRIER-PROTEIN] SYNTHASE III, CHLOROPLASTIC"/>
    <property type="match status" value="1"/>
</dbReference>
<dbReference type="Pfam" id="PF08545">
    <property type="entry name" value="ACP_syn_III"/>
    <property type="match status" value="1"/>
</dbReference>
<dbReference type="Pfam" id="PF08541">
    <property type="entry name" value="ACP_syn_III_C"/>
    <property type="match status" value="1"/>
</dbReference>
<dbReference type="SUPFAM" id="SSF53901">
    <property type="entry name" value="Thiolase-like"/>
    <property type="match status" value="1"/>
</dbReference>
<protein>
    <recommendedName>
        <fullName evidence="1">Beta-ketoacyl-[acyl-carrier-protein] synthase III</fullName>
        <shortName evidence="1">Beta-ketoacyl-ACP synthase III</shortName>
        <shortName evidence="1">KAS III</shortName>
        <ecNumber evidence="1">2.3.1.180</ecNumber>
    </recommendedName>
    <alternativeName>
        <fullName evidence="1">3-oxoacyl-[acyl-carrier-protein] synthase 3</fullName>
    </alternativeName>
    <alternativeName>
        <fullName evidence="1">3-oxoacyl-[acyl-carrier-protein] synthase III</fullName>
    </alternativeName>
</protein>
<organism>
    <name type="scientific">Novosphingobium aromaticivorans (strain ATCC 700278 / DSM 12444 / CCUG 56034 / CIP 105152 / NBRC 16084 / F199)</name>
    <dbReference type="NCBI Taxonomy" id="279238"/>
    <lineage>
        <taxon>Bacteria</taxon>
        <taxon>Pseudomonadati</taxon>
        <taxon>Pseudomonadota</taxon>
        <taxon>Alphaproteobacteria</taxon>
        <taxon>Sphingomonadales</taxon>
        <taxon>Sphingomonadaceae</taxon>
        <taxon>Novosphingobium</taxon>
    </lineage>
</organism>
<evidence type="ECO:0000255" key="1">
    <source>
        <dbReference type="HAMAP-Rule" id="MF_01815"/>
    </source>
</evidence>
<keyword id="KW-0012">Acyltransferase</keyword>
<keyword id="KW-0963">Cytoplasm</keyword>
<keyword id="KW-0275">Fatty acid biosynthesis</keyword>
<keyword id="KW-0276">Fatty acid metabolism</keyword>
<keyword id="KW-0444">Lipid biosynthesis</keyword>
<keyword id="KW-0443">Lipid metabolism</keyword>
<keyword id="KW-0511">Multifunctional enzyme</keyword>
<keyword id="KW-1185">Reference proteome</keyword>
<keyword id="KW-0808">Transferase</keyword>
<name>FABH_NOVAD</name>
<feature type="chain" id="PRO_1000056385" description="Beta-ketoacyl-[acyl-carrier-protein] synthase III">
    <location>
        <begin position="1"/>
        <end position="325"/>
    </location>
</feature>
<feature type="region of interest" description="ACP-binding" evidence="1">
    <location>
        <begin position="253"/>
        <end position="257"/>
    </location>
</feature>
<feature type="active site" evidence="1">
    <location>
        <position position="114"/>
    </location>
</feature>
<feature type="active site" evidence="1">
    <location>
        <position position="252"/>
    </location>
</feature>
<feature type="active site" evidence="1">
    <location>
        <position position="282"/>
    </location>
</feature>